<comment type="function">
    <text evidence="1">Catalyzes the reversible phosphorylation of UMP to UDP.</text>
</comment>
<comment type="catalytic activity">
    <reaction evidence="1">
        <text>UMP + ATP = UDP + ADP</text>
        <dbReference type="Rhea" id="RHEA:24400"/>
        <dbReference type="ChEBI" id="CHEBI:30616"/>
        <dbReference type="ChEBI" id="CHEBI:57865"/>
        <dbReference type="ChEBI" id="CHEBI:58223"/>
        <dbReference type="ChEBI" id="CHEBI:456216"/>
        <dbReference type="EC" id="2.7.4.22"/>
    </reaction>
</comment>
<comment type="activity regulation">
    <text evidence="1">Inhibited by UTP.</text>
</comment>
<comment type="pathway">
    <text evidence="1">Pyrimidine metabolism; CTP biosynthesis via de novo pathway; UDP from UMP (UMPK route): step 1/1.</text>
</comment>
<comment type="subunit">
    <text evidence="1">Homohexamer.</text>
</comment>
<comment type="subcellular location">
    <subcellularLocation>
        <location evidence="1">Cytoplasm</location>
    </subcellularLocation>
</comment>
<comment type="similarity">
    <text evidence="1">Belongs to the UMP kinase family.</text>
</comment>
<reference key="1">
    <citation type="journal article" date="2009" name="Environ. Microbiol.">
        <title>Contribution of mobile genetic elements to Desulfovibrio vulgaris genome plasticity.</title>
        <authorList>
            <person name="Walker C.B."/>
            <person name="Stolyar S."/>
            <person name="Chivian D."/>
            <person name="Pinel N."/>
            <person name="Gabster J.A."/>
            <person name="Dehal P.S."/>
            <person name="He Z."/>
            <person name="Yang Z.K."/>
            <person name="Yen H.C."/>
            <person name="Zhou J."/>
            <person name="Wall J.D."/>
            <person name="Hazen T.C."/>
            <person name="Arkin A.P."/>
            <person name="Stahl D.A."/>
        </authorList>
    </citation>
    <scope>NUCLEOTIDE SEQUENCE [LARGE SCALE GENOMIC DNA]</scope>
    <source>
        <strain>DP4</strain>
    </source>
</reference>
<feature type="chain" id="PRO_0000323839" description="Uridylate kinase">
    <location>
        <begin position="1"/>
        <end position="238"/>
    </location>
</feature>
<feature type="binding site" evidence="1">
    <location>
        <begin position="12"/>
        <end position="15"/>
    </location>
    <ligand>
        <name>ATP</name>
        <dbReference type="ChEBI" id="CHEBI:30616"/>
    </ligand>
</feature>
<feature type="binding site" evidence="1">
    <location>
        <position position="54"/>
    </location>
    <ligand>
        <name>UMP</name>
        <dbReference type="ChEBI" id="CHEBI:57865"/>
    </ligand>
</feature>
<feature type="binding site" evidence="1">
    <location>
        <position position="55"/>
    </location>
    <ligand>
        <name>ATP</name>
        <dbReference type="ChEBI" id="CHEBI:30616"/>
    </ligand>
</feature>
<feature type="binding site" evidence="1">
    <location>
        <position position="59"/>
    </location>
    <ligand>
        <name>ATP</name>
        <dbReference type="ChEBI" id="CHEBI:30616"/>
    </ligand>
</feature>
<feature type="binding site" evidence="1">
    <location>
        <position position="74"/>
    </location>
    <ligand>
        <name>UMP</name>
        <dbReference type="ChEBI" id="CHEBI:57865"/>
    </ligand>
</feature>
<feature type="binding site" evidence="1">
    <location>
        <begin position="135"/>
        <end position="142"/>
    </location>
    <ligand>
        <name>UMP</name>
        <dbReference type="ChEBI" id="CHEBI:57865"/>
    </ligand>
</feature>
<feature type="binding site" evidence="1">
    <location>
        <position position="162"/>
    </location>
    <ligand>
        <name>ATP</name>
        <dbReference type="ChEBI" id="CHEBI:30616"/>
    </ligand>
</feature>
<feature type="binding site" evidence="1">
    <location>
        <position position="168"/>
    </location>
    <ligand>
        <name>ATP</name>
        <dbReference type="ChEBI" id="CHEBI:30616"/>
    </ligand>
</feature>
<feature type="binding site" evidence="1">
    <location>
        <position position="171"/>
    </location>
    <ligand>
        <name>ATP</name>
        <dbReference type="ChEBI" id="CHEBI:30616"/>
    </ligand>
</feature>
<protein>
    <recommendedName>
        <fullName evidence="1">Uridylate kinase</fullName>
        <shortName evidence="1">UK</shortName>
        <ecNumber evidence="1">2.7.4.22</ecNumber>
    </recommendedName>
    <alternativeName>
        <fullName evidence="1">Uridine monophosphate kinase</fullName>
        <shortName evidence="1">UMP kinase</shortName>
        <shortName evidence="1">UMPK</shortName>
    </alternativeName>
</protein>
<gene>
    <name evidence="1" type="primary">pyrH</name>
    <name type="ordered locus">Dvul_2111</name>
</gene>
<evidence type="ECO:0000255" key="1">
    <source>
        <dbReference type="HAMAP-Rule" id="MF_01220"/>
    </source>
</evidence>
<sequence>MSELKYKRVLLKLSGEALAGENKFGIDPATVSKICHEIADVVDMGLQVALVIGGGNIFRGLSSSAKGMDRSSADYMGMLATVLNALAVQDALEKLGHPTRVLSAITMQEVCEPYIRRRAERHLEKGRVVICAAGTGNPYFTTDTAAALRGMELKCEAIIKATKVDGVYDKDPMKHDDAVLFPRLTYVETLQRKLGVMDSTAITLAMENEVPIIVCNMFKGSIKRVVCGEEVGTIVQGG</sequence>
<organism>
    <name type="scientific">Nitratidesulfovibrio vulgaris (strain DP4)</name>
    <name type="common">Desulfovibrio vulgaris</name>
    <dbReference type="NCBI Taxonomy" id="391774"/>
    <lineage>
        <taxon>Bacteria</taxon>
        <taxon>Pseudomonadati</taxon>
        <taxon>Thermodesulfobacteriota</taxon>
        <taxon>Desulfovibrionia</taxon>
        <taxon>Desulfovibrionales</taxon>
        <taxon>Desulfovibrionaceae</taxon>
        <taxon>Nitratidesulfovibrio</taxon>
    </lineage>
</organism>
<keyword id="KW-0067">ATP-binding</keyword>
<keyword id="KW-0963">Cytoplasm</keyword>
<keyword id="KW-0418">Kinase</keyword>
<keyword id="KW-0547">Nucleotide-binding</keyword>
<keyword id="KW-0665">Pyrimidine biosynthesis</keyword>
<keyword id="KW-0808">Transferase</keyword>
<name>PYRH_NITV4</name>
<accession>A1VFB1</accession>
<dbReference type="EC" id="2.7.4.22" evidence="1"/>
<dbReference type="EMBL" id="CP000527">
    <property type="protein sequence ID" value="ABM29127.1"/>
    <property type="molecule type" value="Genomic_DNA"/>
</dbReference>
<dbReference type="RefSeq" id="WP_010938170.1">
    <property type="nucleotide sequence ID" value="NC_008751.1"/>
</dbReference>
<dbReference type="SMR" id="A1VFB1"/>
<dbReference type="KEGG" id="dvl:Dvul_2111"/>
<dbReference type="HOGENOM" id="CLU_033861_0_0_7"/>
<dbReference type="UniPathway" id="UPA00159">
    <property type="reaction ID" value="UER00275"/>
</dbReference>
<dbReference type="Proteomes" id="UP000009173">
    <property type="component" value="Chromosome"/>
</dbReference>
<dbReference type="GO" id="GO:0005737">
    <property type="term" value="C:cytoplasm"/>
    <property type="evidence" value="ECO:0007669"/>
    <property type="project" value="UniProtKB-SubCell"/>
</dbReference>
<dbReference type="GO" id="GO:0005524">
    <property type="term" value="F:ATP binding"/>
    <property type="evidence" value="ECO:0007669"/>
    <property type="project" value="UniProtKB-KW"/>
</dbReference>
<dbReference type="GO" id="GO:0033862">
    <property type="term" value="F:UMP kinase activity"/>
    <property type="evidence" value="ECO:0007669"/>
    <property type="project" value="UniProtKB-EC"/>
</dbReference>
<dbReference type="GO" id="GO:0044210">
    <property type="term" value="P:'de novo' CTP biosynthetic process"/>
    <property type="evidence" value="ECO:0007669"/>
    <property type="project" value="UniProtKB-UniRule"/>
</dbReference>
<dbReference type="GO" id="GO:0006225">
    <property type="term" value="P:UDP biosynthetic process"/>
    <property type="evidence" value="ECO:0007669"/>
    <property type="project" value="TreeGrafter"/>
</dbReference>
<dbReference type="CDD" id="cd04254">
    <property type="entry name" value="AAK_UMPK-PyrH-Ec"/>
    <property type="match status" value="1"/>
</dbReference>
<dbReference type="FunFam" id="3.40.1160.10:FF:000001">
    <property type="entry name" value="Uridylate kinase"/>
    <property type="match status" value="1"/>
</dbReference>
<dbReference type="Gene3D" id="3.40.1160.10">
    <property type="entry name" value="Acetylglutamate kinase-like"/>
    <property type="match status" value="1"/>
</dbReference>
<dbReference type="HAMAP" id="MF_01220_B">
    <property type="entry name" value="PyrH_B"/>
    <property type="match status" value="1"/>
</dbReference>
<dbReference type="InterPro" id="IPR036393">
    <property type="entry name" value="AceGlu_kinase-like_sf"/>
</dbReference>
<dbReference type="InterPro" id="IPR001048">
    <property type="entry name" value="Asp/Glu/Uridylate_kinase"/>
</dbReference>
<dbReference type="InterPro" id="IPR011817">
    <property type="entry name" value="Uridylate_kinase"/>
</dbReference>
<dbReference type="InterPro" id="IPR015963">
    <property type="entry name" value="Uridylate_kinase_bac"/>
</dbReference>
<dbReference type="NCBIfam" id="TIGR02075">
    <property type="entry name" value="pyrH_bact"/>
    <property type="match status" value="1"/>
</dbReference>
<dbReference type="PANTHER" id="PTHR42833">
    <property type="entry name" value="URIDYLATE KINASE"/>
    <property type="match status" value="1"/>
</dbReference>
<dbReference type="PANTHER" id="PTHR42833:SF4">
    <property type="entry name" value="URIDYLATE KINASE PUMPKIN, CHLOROPLASTIC"/>
    <property type="match status" value="1"/>
</dbReference>
<dbReference type="Pfam" id="PF00696">
    <property type="entry name" value="AA_kinase"/>
    <property type="match status" value="1"/>
</dbReference>
<dbReference type="PIRSF" id="PIRSF005650">
    <property type="entry name" value="Uridylate_kin"/>
    <property type="match status" value="1"/>
</dbReference>
<dbReference type="SUPFAM" id="SSF53633">
    <property type="entry name" value="Carbamate kinase-like"/>
    <property type="match status" value="1"/>
</dbReference>
<proteinExistence type="inferred from homology"/>